<evidence type="ECO:0000255" key="1">
    <source>
        <dbReference type="HAMAP-Rule" id="MF_00550"/>
    </source>
</evidence>
<name>PEPT_CLOB1</name>
<accession>A7FPG2</accession>
<keyword id="KW-0031">Aminopeptidase</keyword>
<keyword id="KW-0963">Cytoplasm</keyword>
<keyword id="KW-0378">Hydrolase</keyword>
<keyword id="KW-0479">Metal-binding</keyword>
<keyword id="KW-0482">Metalloprotease</keyword>
<keyword id="KW-0645">Protease</keyword>
<keyword id="KW-0862">Zinc</keyword>
<reference key="1">
    <citation type="journal article" date="2007" name="PLoS ONE">
        <title>Analysis of the neurotoxin complex genes in Clostridium botulinum A1-A4 and B1 strains: BoNT/A3, /Ba4 and /B1 clusters are located within plasmids.</title>
        <authorList>
            <person name="Smith T.J."/>
            <person name="Hill K.K."/>
            <person name="Foley B.T."/>
            <person name="Detter J.C."/>
            <person name="Munk A.C."/>
            <person name="Bruce D.C."/>
            <person name="Doggett N.A."/>
            <person name="Smith L.A."/>
            <person name="Marks J.D."/>
            <person name="Xie G."/>
            <person name="Brettin T.S."/>
        </authorList>
    </citation>
    <scope>NUCLEOTIDE SEQUENCE [LARGE SCALE GENOMIC DNA]</scope>
    <source>
        <strain>ATCC 19397 / Type A</strain>
    </source>
</reference>
<gene>
    <name evidence="1" type="primary">pepT</name>
    <name type="ordered locus">CLB_0480</name>
</gene>
<feature type="chain" id="PRO_1000017840" description="Peptidase T">
    <location>
        <begin position="1"/>
        <end position="408"/>
    </location>
</feature>
<feature type="active site" evidence="1">
    <location>
        <position position="80"/>
    </location>
</feature>
<feature type="active site" description="Proton acceptor" evidence="1">
    <location>
        <position position="175"/>
    </location>
</feature>
<feature type="binding site" evidence="1">
    <location>
        <position position="78"/>
    </location>
    <ligand>
        <name>Zn(2+)</name>
        <dbReference type="ChEBI" id="CHEBI:29105"/>
        <label>1</label>
    </ligand>
</feature>
<feature type="binding site" evidence="1">
    <location>
        <position position="141"/>
    </location>
    <ligand>
        <name>Zn(2+)</name>
        <dbReference type="ChEBI" id="CHEBI:29105"/>
        <label>1</label>
    </ligand>
</feature>
<feature type="binding site" evidence="1">
    <location>
        <position position="141"/>
    </location>
    <ligand>
        <name>Zn(2+)</name>
        <dbReference type="ChEBI" id="CHEBI:29105"/>
        <label>2</label>
    </ligand>
</feature>
<feature type="binding site" evidence="1">
    <location>
        <position position="176"/>
    </location>
    <ligand>
        <name>Zn(2+)</name>
        <dbReference type="ChEBI" id="CHEBI:29105"/>
        <label>2</label>
    </ligand>
</feature>
<feature type="binding site" evidence="1">
    <location>
        <position position="198"/>
    </location>
    <ligand>
        <name>Zn(2+)</name>
        <dbReference type="ChEBI" id="CHEBI:29105"/>
        <label>1</label>
    </ligand>
</feature>
<feature type="binding site" evidence="1">
    <location>
        <position position="380"/>
    </location>
    <ligand>
        <name>Zn(2+)</name>
        <dbReference type="ChEBI" id="CHEBI:29105"/>
        <label>2</label>
    </ligand>
</feature>
<proteinExistence type="inferred from homology"/>
<sequence>MKDVLERFLGYIKVDTQSSEESDTVPTTKTQLEFAKKLGEELKAIGLKDVSVDENGYVMATLESNIDKKVPTIGFIAHMDTSPDLSGTNINPRIVEKYDGQDIVLNKEKNIVLKINEFPEILEYKGQDIVVTDGNTLLGADDKAGIAEIITAMEYLINHPEIKHGTIKVGFTPDEEVGKGADHFDVKKFGADLAYTLDGGGIGELECETFNAAKAKVIIEGRNVHPGSAKNKMTNAVLVANKFINMLPENEVPERTEGYEGFFHLLSVKSEVETAELNYIIRDFDRKKFEERKEQIKEVGKKINEEYNKEIVCVKVEDQYYNMKEKIDEVKYVVDIAYDAMKAIDIEPILVPIRGGTDGSRLSFMGLPTPNLFAGGHNFHGRFEFVPVLSMEKAAELVVKIAELYANR</sequence>
<protein>
    <recommendedName>
        <fullName evidence="1">Peptidase T</fullName>
        <ecNumber evidence="1">3.4.11.4</ecNumber>
    </recommendedName>
    <alternativeName>
        <fullName evidence="1">Aminotripeptidase</fullName>
        <shortName evidence="1">Tripeptidase</shortName>
    </alternativeName>
    <alternativeName>
        <fullName evidence="1">Tripeptide aminopeptidase</fullName>
    </alternativeName>
</protein>
<comment type="function">
    <text evidence="1">Cleaves the N-terminal amino acid of tripeptides.</text>
</comment>
<comment type="catalytic activity">
    <reaction evidence="1">
        <text>Release of the N-terminal residue from a tripeptide.</text>
        <dbReference type="EC" id="3.4.11.4"/>
    </reaction>
</comment>
<comment type="cofactor">
    <cofactor evidence="1">
        <name>Zn(2+)</name>
        <dbReference type="ChEBI" id="CHEBI:29105"/>
    </cofactor>
    <text evidence="1">Binds 2 Zn(2+) ions per subunit.</text>
</comment>
<comment type="subcellular location">
    <subcellularLocation>
        <location evidence="1">Cytoplasm</location>
    </subcellularLocation>
</comment>
<comment type="similarity">
    <text evidence="1">Belongs to the peptidase M20B family.</text>
</comment>
<dbReference type="EC" id="3.4.11.4" evidence="1"/>
<dbReference type="EMBL" id="CP000726">
    <property type="protein sequence ID" value="ABS33071.1"/>
    <property type="molecule type" value="Genomic_DNA"/>
</dbReference>
<dbReference type="RefSeq" id="WP_011948200.1">
    <property type="nucleotide sequence ID" value="NC_009697.1"/>
</dbReference>
<dbReference type="SMR" id="A7FPG2"/>
<dbReference type="MEROPS" id="M20.003"/>
<dbReference type="GeneID" id="5184693"/>
<dbReference type="KEGG" id="cba:CLB_0480"/>
<dbReference type="HOGENOM" id="CLU_053676_0_0_9"/>
<dbReference type="GO" id="GO:0005829">
    <property type="term" value="C:cytosol"/>
    <property type="evidence" value="ECO:0007669"/>
    <property type="project" value="TreeGrafter"/>
</dbReference>
<dbReference type="GO" id="GO:0008237">
    <property type="term" value="F:metallopeptidase activity"/>
    <property type="evidence" value="ECO:0007669"/>
    <property type="project" value="UniProtKB-KW"/>
</dbReference>
<dbReference type="GO" id="GO:0045148">
    <property type="term" value="F:tripeptide aminopeptidase activity"/>
    <property type="evidence" value="ECO:0007669"/>
    <property type="project" value="UniProtKB-UniRule"/>
</dbReference>
<dbReference type="GO" id="GO:0008270">
    <property type="term" value="F:zinc ion binding"/>
    <property type="evidence" value="ECO:0007669"/>
    <property type="project" value="UniProtKB-UniRule"/>
</dbReference>
<dbReference type="GO" id="GO:0043171">
    <property type="term" value="P:peptide catabolic process"/>
    <property type="evidence" value="ECO:0007669"/>
    <property type="project" value="UniProtKB-UniRule"/>
</dbReference>
<dbReference type="GO" id="GO:0006508">
    <property type="term" value="P:proteolysis"/>
    <property type="evidence" value="ECO:0007669"/>
    <property type="project" value="UniProtKB-UniRule"/>
</dbReference>
<dbReference type="CDD" id="cd03892">
    <property type="entry name" value="M20_peptT"/>
    <property type="match status" value="1"/>
</dbReference>
<dbReference type="FunFam" id="3.30.70.360:FF:000002">
    <property type="entry name" value="Peptidase T"/>
    <property type="match status" value="1"/>
</dbReference>
<dbReference type="Gene3D" id="3.30.70.360">
    <property type="match status" value="1"/>
</dbReference>
<dbReference type="Gene3D" id="3.40.630.10">
    <property type="entry name" value="Zn peptidases"/>
    <property type="match status" value="1"/>
</dbReference>
<dbReference type="HAMAP" id="MF_00550">
    <property type="entry name" value="Aminopeptidase_M20"/>
    <property type="match status" value="1"/>
</dbReference>
<dbReference type="InterPro" id="IPR001261">
    <property type="entry name" value="ArgE/DapE_CS"/>
</dbReference>
<dbReference type="InterPro" id="IPR036264">
    <property type="entry name" value="Bact_exopeptidase_dim_dom"/>
</dbReference>
<dbReference type="InterPro" id="IPR002933">
    <property type="entry name" value="Peptidase_M20"/>
</dbReference>
<dbReference type="InterPro" id="IPR011650">
    <property type="entry name" value="Peptidase_M20_dimer"/>
</dbReference>
<dbReference type="InterPro" id="IPR010161">
    <property type="entry name" value="Peptidase_M20B"/>
</dbReference>
<dbReference type="NCBIfam" id="TIGR01882">
    <property type="entry name" value="peptidase-T"/>
    <property type="match status" value="1"/>
</dbReference>
<dbReference type="NCBIfam" id="NF003976">
    <property type="entry name" value="PRK05469.1"/>
    <property type="match status" value="1"/>
</dbReference>
<dbReference type="NCBIfam" id="NF009920">
    <property type="entry name" value="PRK13381.1"/>
    <property type="match status" value="1"/>
</dbReference>
<dbReference type="PANTHER" id="PTHR42994">
    <property type="entry name" value="PEPTIDASE T"/>
    <property type="match status" value="1"/>
</dbReference>
<dbReference type="PANTHER" id="PTHR42994:SF1">
    <property type="entry name" value="PEPTIDASE T"/>
    <property type="match status" value="1"/>
</dbReference>
<dbReference type="Pfam" id="PF07687">
    <property type="entry name" value="M20_dimer"/>
    <property type="match status" value="1"/>
</dbReference>
<dbReference type="Pfam" id="PF01546">
    <property type="entry name" value="Peptidase_M20"/>
    <property type="match status" value="1"/>
</dbReference>
<dbReference type="PIRSF" id="PIRSF037215">
    <property type="entry name" value="Peptidase_M20B"/>
    <property type="match status" value="1"/>
</dbReference>
<dbReference type="SUPFAM" id="SSF55031">
    <property type="entry name" value="Bacterial exopeptidase dimerisation domain"/>
    <property type="match status" value="1"/>
</dbReference>
<dbReference type="SUPFAM" id="SSF53187">
    <property type="entry name" value="Zn-dependent exopeptidases"/>
    <property type="match status" value="1"/>
</dbReference>
<dbReference type="PROSITE" id="PS00758">
    <property type="entry name" value="ARGE_DAPE_CPG2_1"/>
    <property type="match status" value="1"/>
</dbReference>
<dbReference type="PROSITE" id="PS00759">
    <property type="entry name" value="ARGE_DAPE_CPG2_2"/>
    <property type="match status" value="1"/>
</dbReference>
<organism>
    <name type="scientific">Clostridium botulinum (strain ATCC 19397 / Type A)</name>
    <dbReference type="NCBI Taxonomy" id="441770"/>
    <lineage>
        <taxon>Bacteria</taxon>
        <taxon>Bacillati</taxon>
        <taxon>Bacillota</taxon>
        <taxon>Clostridia</taxon>
        <taxon>Eubacteriales</taxon>
        <taxon>Clostridiaceae</taxon>
        <taxon>Clostridium</taxon>
    </lineage>
</organism>